<feature type="chain" id="PRO_0000123847" description="Aspartate/prephenate aminotransferase">
    <location>
        <begin position="1"/>
        <end position="400"/>
    </location>
</feature>
<feature type="binding site" evidence="1">
    <location>
        <position position="39"/>
    </location>
    <ligand>
        <name>L-aspartate</name>
        <dbReference type="ChEBI" id="CHEBI:29991"/>
    </ligand>
</feature>
<feature type="binding site" evidence="2">
    <location>
        <position position="125"/>
    </location>
    <ligand>
        <name>L-aspartate</name>
        <dbReference type="ChEBI" id="CHEBI:29991"/>
    </ligand>
</feature>
<feature type="binding site" evidence="2">
    <location>
        <position position="175"/>
    </location>
    <ligand>
        <name>L-aspartate</name>
        <dbReference type="ChEBI" id="CHEBI:29991"/>
    </ligand>
</feature>
<feature type="binding site" evidence="2">
    <location>
        <position position="375"/>
    </location>
    <ligand>
        <name>L-aspartate</name>
        <dbReference type="ChEBI" id="CHEBI:29991"/>
    </ligand>
</feature>
<feature type="site" description="Important for prephenate aminotransferase activity" evidence="5">
    <location>
        <position position="12"/>
    </location>
</feature>
<feature type="modified residue" description="N6-(pyridoxal phosphate)lysine" evidence="2">
    <location>
        <position position="239"/>
    </location>
</feature>
<feature type="mutagenesis site" description="7-fold increase in Km for prephenate. Weakly affects Km for oxaloacetate." evidence="5">
    <original>K</original>
    <variation>G</variation>
    <location>
        <position position="12"/>
    </location>
</feature>
<feature type="helix" evidence="10">
    <location>
        <begin position="6"/>
        <end position="10"/>
    </location>
</feature>
<feature type="helix" evidence="10">
    <location>
        <begin position="15"/>
        <end position="28"/>
    </location>
</feature>
<feature type="helix" evidence="10">
    <location>
        <begin position="47"/>
        <end position="59"/>
    </location>
</feature>
<feature type="helix" evidence="10">
    <location>
        <begin position="71"/>
        <end position="85"/>
    </location>
</feature>
<feature type="helix" evidence="10">
    <location>
        <begin position="91"/>
        <end position="93"/>
    </location>
</feature>
<feature type="strand" evidence="10">
    <location>
        <begin position="94"/>
        <end position="98"/>
    </location>
</feature>
<feature type="helix" evidence="10">
    <location>
        <begin position="99"/>
        <end position="109"/>
    </location>
</feature>
<feature type="strand" evidence="10">
    <location>
        <begin position="117"/>
        <end position="123"/>
    </location>
</feature>
<feature type="helix" evidence="10">
    <location>
        <begin position="127"/>
        <end position="134"/>
    </location>
</feature>
<feature type="strand" evidence="10">
    <location>
        <begin position="138"/>
        <end position="143"/>
    </location>
</feature>
<feature type="helix" evidence="10">
    <location>
        <begin position="146"/>
        <end position="148"/>
    </location>
</feature>
<feature type="helix" evidence="10">
    <location>
        <begin position="154"/>
        <end position="160"/>
    </location>
</feature>
<feature type="strand" evidence="10">
    <location>
        <begin position="165"/>
        <end position="173"/>
    </location>
</feature>
<feature type="turn" evidence="10">
    <location>
        <begin position="175"/>
        <end position="177"/>
    </location>
</feature>
<feature type="helix" evidence="10">
    <location>
        <begin position="183"/>
        <end position="193"/>
    </location>
</feature>
<feature type="strand" evidence="10">
    <location>
        <begin position="200"/>
        <end position="204"/>
    </location>
</feature>
<feature type="turn" evidence="10">
    <location>
        <begin position="206"/>
        <end position="209"/>
    </location>
</feature>
<feature type="helix" evidence="10">
    <location>
        <begin position="220"/>
        <end position="223"/>
    </location>
</feature>
<feature type="helix" evidence="10">
    <location>
        <begin position="225"/>
        <end position="230"/>
    </location>
</feature>
<feature type="strand" evidence="10">
    <location>
        <begin position="231"/>
        <end position="237"/>
    </location>
</feature>
<feature type="turn" evidence="10">
    <location>
        <begin position="238"/>
        <end position="242"/>
    </location>
</feature>
<feature type="helix" evidence="10">
    <location>
        <begin position="244"/>
        <end position="246"/>
    </location>
</feature>
<feature type="strand" evidence="10">
    <location>
        <begin position="249"/>
        <end position="252"/>
    </location>
</feature>
<feature type="helix" evidence="10">
    <location>
        <begin position="255"/>
        <end position="268"/>
    </location>
</feature>
<feature type="helix" evidence="10">
    <location>
        <begin position="274"/>
        <end position="285"/>
    </location>
</feature>
<feature type="helix" evidence="10">
    <location>
        <begin position="289"/>
        <end position="309"/>
    </location>
</feature>
<feature type="helix" evidence="10">
    <location>
        <begin position="331"/>
        <end position="333"/>
    </location>
</feature>
<feature type="helix" evidence="10">
    <location>
        <begin position="347"/>
        <end position="358"/>
    </location>
</feature>
<feature type="helix" evidence="10">
    <location>
        <begin position="365"/>
        <end position="368"/>
    </location>
</feature>
<feature type="strand" evidence="10">
    <location>
        <begin position="372"/>
        <end position="377"/>
    </location>
</feature>
<feature type="helix" evidence="10">
    <location>
        <begin position="382"/>
        <end position="398"/>
    </location>
</feature>
<accession>Q02635</accession>
<reference key="1">
    <citation type="journal article" date="1991" name="J. Bacteriol.">
        <title>Aspartate aminotransferase activity is required for aspartate catabolism and symbiotic nitrogen fixation in Rhizobium meliloti.</title>
        <authorList>
            <person name="Rastogi V.K."/>
            <person name="Watson R.J."/>
        </authorList>
    </citation>
    <scope>NUCLEOTIDE SEQUENCE [GENOMIC DNA]</scope>
    <scope>FUNCTION</scope>
    <scope>DISRUPTION PHENOTYPE</scope>
    <source>
        <strain>JJ1c10</strain>
    </source>
</reference>
<reference key="2">
    <citation type="journal article" date="1993" name="J. Bacteriol.">
        <title>Cloning and nucleotide sequencing of Rhizobium meliloti aminotransferase genes: an aspartate aminotransferase required for symbiotic nitrogen fixation is atypical.</title>
        <authorList>
            <person name="Watson R.J."/>
            <person name="Rastogi V.K."/>
        </authorList>
    </citation>
    <scope>NUCLEOTIDE SEQUENCE [GENOMIC DNA]</scope>
    <scope>FUNCTION</scope>
    <scope>CATALYTIC ACTIVITY</scope>
    <source>
        <strain>JJ1c10</strain>
    </source>
</reference>
<reference key="3">
    <citation type="journal article" date="2001" name="Proc. Natl. Acad. Sci. U.S.A.">
        <title>Analysis of the chromosome sequence of the legume symbiont Sinorhizobium meliloti strain 1021.</title>
        <authorList>
            <person name="Capela D."/>
            <person name="Barloy-Hubler F."/>
            <person name="Gouzy J."/>
            <person name="Bothe G."/>
            <person name="Ampe F."/>
            <person name="Batut J."/>
            <person name="Boistard P."/>
            <person name="Becker A."/>
            <person name="Boutry M."/>
            <person name="Cadieu E."/>
            <person name="Dreano S."/>
            <person name="Gloux S."/>
            <person name="Godrie T."/>
            <person name="Goffeau A."/>
            <person name="Kahn D."/>
            <person name="Kiss E."/>
            <person name="Lelaure V."/>
            <person name="Masuy D."/>
            <person name="Pohl T."/>
            <person name="Portetelle D."/>
            <person name="Puehler A."/>
            <person name="Purnelle B."/>
            <person name="Ramsperger U."/>
            <person name="Renard C."/>
            <person name="Thebault P."/>
            <person name="Vandenbol M."/>
            <person name="Weidner S."/>
            <person name="Galibert F."/>
        </authorList>
    </citation>
    <scope>NUCLEOTIDE SEQUENCE [LARGE SCALE GENOMIC DNA]</scope>
    <source>
        <strain>1021</strain>
    </source>
</reference>
<reference key="4">
    <citation type="journal article" date="2001" name="Science">
        <title>The composite genome of the legume symbiont Sinorhizobium meliloti.</title>
        <authorList>
            <person name="Galibert F."/>
            <person name="Finan T.M."/>
            <person name="Long S.R."/>
            <person name="Puehler A."/>
            <person name="Abola P."/>
            <person name="Ampe F."/>
            <person name="Barloy-Hubler F."/>
            <person name="Barnett M.J."/>
            <person name="Becker A."/>
            <person name="Boistard P."/>
            <person name="Bothe G."/>
            <person name="Boutry M."/>
            <person name="Bowser L."/>
            <person name="Buhrmester J."/>
            <person name="Cadieu E."/>
            <person name="Capela D."/>
            <person name="Chain P."/>
            <person name="Cowie A."/>
            <person name="Davis R.W."/>
            <person name="Dreano S."/>
            <person name="Federspiel N.A."/>
            <person name="Fisher R.F."/>
            <person name="Gloux S."/>
            <person name="Godrie T."/>
            <person name="Goffeau A."/>
            <person name="Golding B."/>
            <person name="Gouzy J."/>
            <person name="Gurjal M."/>
            <person name="Hernandez-Lucas I."/>
            <person name="Hong A."/>
            <person name="Huizar L."/>
            <person name="Hyman R.W."/>
            <person name="Jones T."/>
            <person name="Kahn D."/>
            <person name="Kahn M.L."/>
            <person name="Kalman S."/>
            <person name="Keating D.H."/>
            <person name="Kiss E."/>
            <person name="Komp C."/>
            <person name="Lelaure V."/>
            <person name="Masuy D."/>
            <person name="Palm C."/>
            <person name="Peck M.C."/>
            <person name="Pohl T.M."/>
            <person name="Portetelle D."/>
            <person name="Purnelle B."/>
            <person name="Ramsperger U."/>
            <person name="Surzycki R."/>
            <person name="Thebault P."/>
            <person name="Vandenbol M."/>
            <person name="Vorhoelter F.J."/>
            <person name="Weidner S."/>
            <person name="Wells D.H."/>
            <person name="Wong K."/>
            <person name="Yeh K.-C."/>
            <person name="Batut J."/>
        </authorList>
    </citation>
    <scope>NUCLEOTIDE SEQUENCE [LARGE SCALE GENOMIC DNA]</scope>
    <source>
        <strain>1021</strain>
    </source>
</reference>
<reference key="5">
    <citation type="journal article" date="2014" name="J. Biol. Chem.">
        <title>Three different classes of aminotransferases evolved prephenate aminotransferase functionality in arogenate-competent microorganisms.</title>
        <authorList>
            <person name="Graindorge M."/>
            <person name="Giustini C."/>
            <person name="Kraut A."/>
            <person name="Moyet L."/>
            <person name="Curien G."/>
            <person name="Matringe M."/>
        </authorList>
    </citation>
    <scope>FUNCTION</scope>
    <scope>CATALYTIC ACTIVITY</scope>
    <scope>BIOPHYSICOCHEMICAL PROPERTIES</scope>
    <source>
        <strain>RCR2011</strain>
    </source>
</reference>
<reference evidence="9" key="6">
    <citation type="journal article" date="2019" name="FEBS J.">
        <title>Tyrosine metabolism: identification of a key residue in the acquisition of prephenate aminotransferase activity by 1beta aspartate aminotransferase.</title>
        <authorList>
            <person name="Giustini C."/>
            <person name="Graindorge M."/>
            <person name="Cobessi D."/>
            <person name="Crouzy S."/>
            <person name="Robin A."/>
            <person name="Curien G."/>
            <person name="Matringe M."/>
        </authorList>
    </citation>
    <scope>X-RAY CRYSTALLOGRAPHY (1.79 ANGSTROMS)</scope>
    <scope>COFACTOR</scope>
    <scope>SUBUNIT</scope>
    <scope>MUTAGENESIS OF LYS-12</scope>
</reference>
<name>AAPAT_RHIME</name>
<comment type="function">
    <text evidence="3 4 6">Catalyzes the reversible conversion of aspartate and 2-oxoglutarate to glutamate and oxaloacetate (PubMed:24302739, PubMed:8096210). Can also transaminate prephenate in the presence of glutamate (PubMed:24302739). Required for symbiotic nitrogen fixation (PubMed:2019560).</text>
</comment>
<comment type="catalytic activity">
    <reaction evidence="4 6">
        <text>L-aspartate + 2-oxoglutarate = oxaloacetate + L-glutamate</text>
        <dbReference type="Rhea" id="RHEA:21824"/>
        <dbReference type="ChEBI" id="CHEBI:16452"/>
        <dbReference type="ChEBI" id="CHEBI:16810"/>
        <dbReference type="ChEBI" id="CHEBI:29985"/>
        <dbReference type="ChEBI" id="CHEBI:29991"/>
        <dbReference type="EC" id="2.6.1.1"/>
    </reaction>
</comment>
<comment type="catalytic activity">
    <reaction evidence="4">
        <text>L-arogenate + 2-oxoglutarate = prephenate + L-glutamate</text>
        <dbReference type="Rhea" id="RHEA:22880"/>
        <dbReference type="ChEBI" id="CHEBI:16810"/>
        <dbReference type="ChEBI" id="CHEBI:29934"/>
        <dbReference type="ChEBI" id="CHEBI:29985"/>
        <dbReference type="ChEBI" id="CHEBI:58180"/>
        <dbReference type="EC" id="2.6.1.79"/>
    </reaction>
</comment>
<comment type="cofactor">
    <cofactor evidence="5">
        <name>pyridoxal 5'-phosphate</name>
        <dbReference type="ChEBI" id="CHEBI:597326"/>
    </cofactor>
</comment>
<comment type="biophysicochemical properties">
    <kinetics>
        <KM evidence="4">17 uM for oxaloacetate</KM>
        <KM evidence="4">100 uM for prephenate</KM>
        <text evidence="4">kcat is 205 sec(-1) with oxaloacetate as substrate. kcat is 43 sec(-1) with prephenate as substrate.</text>
    </kinetics>
</comment>
<comment type="subunit">
    <text evidence="5">Homodimer.</text>
</comment>
<comment type="subcellular location">
    <subcellularLocation>
        <location evidence="8">Cytoplasm</location>
    </subcellularLocation>
</comment>
<comment type="disruption phenotype">
    <text evidence="3">Mutant is unable to grow on aspartate but can grow on other carbon and nitrogen sources. Mutant is unable to fix nitrogen within nodules formed on alfalfa.</text>
</comment>
<comment type="similarity">
    <text evidence="8">Belongs to the class-I pyridoxal-phosphate-dependent aminotransferase family.</text>
</comment>
<protein>
    <recommendedName>
        <fullName evidence="8">Aspartate/prephenate aminotransferase</fullName>
        <shortName evidence="8">AspAT / PAT</shortName>
        <ecNumber evidence="4 6">2.6.1.1</ecNumber>
        <ecNumber evidence="4">2.6.1.79</ecNumber>
    </recommendedName>
    <alternativeName>
        <fullName>Transaminase A</fullName>
    </alternativeName>
</protein>
<keyword id="KW-0002">3D-structure</keyword>
<keyword id="KW-0032">Aminotransferase</keyword>
<keyword id="KW-0963">Cytoplasm</keyword>
<keyword id="KW-0663">Pyridoxal phosphate</keyword>
<keyword id="KW-1185">Reference proteome</keyword>
<keyword id="KW-0808">Transferase</keyword>
<gene>
    <name evidence="7" type="primary">aatA</name>
    <name type="ordered locus">R02325</name>
    <name type="ORF">SMc01578</name>
</gene>
<dbReference type="EC" id="2.6.1.1" evidence="4 6"/>
<dbReference type="EC" id="2.6.1.79" evidence="4"/>
<dbReference type="EMBL" id="L05064">
    <property type="protein sequence ID" value="AAA26245.1"/>
    <property type="molecule type" value="Genomic_DNA"/>
</dbReference>
<dbReference type="EMBL" id="AL591688">
    <property type="protein sequence ID" value="CAC46904.1"/>
    <property type="molecule type" value="Genomic_DNA"/>
</dbReference>
<dbReference type="PIR" id="A47094">
    <property type="entry name" value="A47094"/>
</dbReference>
<dbReference type="RefSeq" id="NP_386431.1">
    <property type="nucleotide sequence ID" value="NC_003047.1"/>
</dbReference>
<dbReference type="RefSeq" id="WP_010969860.1">
    <property type="nucleotide sequence ID" value="NC_003047.1"/>
</dbReference>
<dbReference type="PDB" id="6F77">
    <property type="method" value="X-ray"/>
    <property type="resolution" value="1.79 A"/>
    <property type="chains" value="A/B/C/D/E/F=1-400"/>
</dbReference>
<dbReference type="PDBsum" id="6F77"/>
<dbReference type="SMR" id="Q02635"/>
<dbReference type="EnsemblBacteria" id="CAC46904">
    <property type="protein sequence ID" value="CAC46904"/>
    <property type="gene ID" value="SMc01578"/>
</dbReference>
<dbReference type="KEGG" id="sme:SMc01578"/>
<dbReference type="PATRIC" id="fig|266834.11.peg.3805"/>
<dbReference type="eggNOG" id="COG0436">
    <property type="taxonomic scope" value="Bacteria"/>
</dbReference>
<dbReference type="HOGENOM" id="CLU_017584_4_3_5"/>
<dbReference type="OrthoDB" id="9763453at2"/>
<dbReference type="BRENDA" id="2.6.1.1">
    <property type="organism ID" value="5347"/>
</dbReference>
<dbReference type="BRENDA" id="2.6.1.78">
    <property type="organism ID" value="5347"/>
</dbReference>
<dbReference type="BRENDA" id="2.6.1.79">
    <property type="organism ID" value="5347"/>
</dbReference>
<dbReference type="Proteomes" id="UP000001976">
    <property type="component" value="Chromosome"/>
</dbReference>
<dbReference type="GO" id="GO:0005737">
    <property type="term" value="C:cytoplasm"/>
    <property type="evidence" value="ECO:0007669"/>
    <property type="project" value="UniProtKB-SubCell"/>
</dbReference>
<dbReference type="GO" id="GO:0033854">
    <property type="term" value="F:glutamate-prephenate aminotransferase activity"/>
    <property type="evidence" value="ECO:0007669"/>
    <property type="project" value="UniProtKB-EC"/>
</dbReference>
<dbReference type="GO" id="GO:0004069">
    <property type="term" value="F:L-aspartate:2-oxoglutarate aminotransferase activity"/>
    <property type="evidence" value="ECO:0007669"/>
    <property type="project" value="UniProtKB-EC"/>
</dbReference>
<dbReference type="GO" id="GO:0030170">
    <property type="term" value="F:pyridoxal phosphate binding"/>
    <property type="evidence" value="ECO:0007669"/>
    <property type="project" value="InterPro"/>
</dbReference>
<dbReference type="GO" id="GO:0006520">
    <property type="term" value="P:amino acid metabolic process"/>
    <property type="evidence" value="ECO:0007669"/>
    <property type="project" value="InterPro"/>
</dbReference>
<dbReference type="GO" id="GO:0009058">
    <property type="term" value="P:biosynthetic process"/>
    <property type="evidence" value="ECO:0007669"/>
    <property type="project" value="InterPro"/>
</dbReference>
<dbReference type="CDD" id="cd00609">
    <property type="entry name" value="AAT_like"/>
    <property type="match status" value="1"/>
</dbReference>
<dbReference type="FunFam" id="3.40.640.10:FF:000033">
    <property type="entry name" value="Aspartate aminotransferase"/>
    <property type="match status" value="1"/>
</dbReference>
<dbReference type="Gene3D" id="3.90.1150.10">
    <property type="entry name" value="Aspartate Aminotransferase, domain 1"/>
    <property type="match status" value="1"/>
</dbReference>
<dbReference type="Gene3D" id="3.40.640.10">
    <property type="entry name" value="Type I PLP-dependent aspartate aminotransferase-like (Major domain)"/>
    <property type="match status" value="1"/>
</dbReference>
<dbReference type="InterPro" id="IPR004839">
    <property type="entry name" value="Aminotransferase_I/II_large"/>
</dbReference>
<dbReference type="InterPro" id="IPR050596">
    <property type="entry name" value="AspAT/PAT-like"/>
</dbReference>
<dbReference type="InterPro" id="IPR004838">
    <property type="entry name" value="NHTrfase_class1_PyrdxlP-BS"/>
</dbReference>
<dbReference type="InterPro" id="IPR015424">
    <property type="entry name" value="PyrdxlP-dep_Trfase"/>
</dbReference>
<dbReference type="InterPro" id="IPR015421">
    <property type="entry name" value="PyrdxlP-dep_Trfase_major"/>
</dbReference>
<dbReference type="InterPro" id="IPR015422">
    <property type="entry name" value="PyrdxlP-dep_Trfase_small"/>
</dbReference>
<dbReference type="PANTHER" id="PTHR46383">
    <property type="entry name" value="ASPARTATE AMINOTRANSFERASE"/>
    <property type="match status" value="1"/>
</dbReference>
<dbReference type="PANTHER" id="PTHR46383:SF1">
    <property type="entry name" value="ASPARTATE AMINOTRANSFERASE"/>
    <property type="match status" value="1"/>
</dbReference>
<dbReference type="Pfam" id="PF00155">
    <property type="entry name" value="Aminotran_1_2"/>
    <property type="match status" value="1"/>
</dbReference>
<dbReference type="SUPFAM" id="SSF53383">
    <property type="entry name" value="PLP-dependent transferases"/>
    <property type="match status" value="1"/>
</dbReference>
<dbReference type="PROSITE" id="PS00105">
    <property type="entry name" value="AA_TRANSFER_CLASS_1"/>
    <property type="match status" value="1"/>
</dbReference>
<sequence>MAFLADALSRVKPSATIAVSQKARELKAKGRDVIGLGAGEPDFDTPDNIKKAAIDAIDRGETKYTPVSGIPELREAIAKKFKRENNLDYTAAQTIVGTGGKQILFNAFMATLNPGDEVVIPAPYWVSYPEMVALCGGTPVFVPTRQENNFKLKAEDLDRAITPKTKWFVFNSPSNPSGAAYSHEELKALTDVLMKHPHVWVLTDDMYEHLTYGDFRFATPVEVEPGLYERTLTMNGVSKAYAMTGWRIGYAAGPLHLIKAMDMIQGQQTSGAASIAQWAAVEALNGPQDFIGRNKEIFQGRRDLVVSMLNQAKGISCPTPEGAFYVYPSCAGLIGKTAPSGKVIETDEDFVSELLETEGVAVVHGSAFGLGPNFRISYATSEALLEEACRRIQRFCAACR</sequence>
<evidence type="ECO:0000250" key="1">
    <source>
        <dbReference type="UniProtKB" id="P00509"/>
    </source>
</evidence>
<evidence type="ECO:0000250" key="2">
    <source>
        <dbReference type="UniProtKB" id="Q56232"/>
    </source>
</evidence>
<evidence type="ECO:0000269" key="3">
    <source>
    </source>
</evidence>
<evidence type="ECO:0000269" key="4">
    <source>
    </source>
</evidence>
<evidence type="ECO:0000269" key="5">
    <source>
    </source>
</evidence>
<evidence type="ECO:0000269" key="6">
    <source>
    </source>
</evidence>
<evidence type="ECO:0000303" key="7">
    <source>
    </source>
</evidence>
<evidence type="ECO:0000305" key="8"/>
<evidence type="ECO:0007744" key="9">
    <source>
        <dbReference type="PDB" id="6F77"/>
    </source>
</evidence>
<evidence type="ECO:0007829" key="10">
    <source>
        <dbReference type="PDB" id="6F77"/>
    </source>
</evidence>
<proteinExistence type="evidence at protein level"/>
<organism>
    <name type="scientific">Rhizobium meliloti (strain 1021)</name>
    <name type="common">Ensifer meliloti</name>
    <name type="synonym">Sinorhizobium meliloti</name>
    <dbReference type="NCBI Taxonomy" id="266834"/>
    <lineage>
        <taxon>Bacteria</taxon>
        <taxon>Pseudomonadati</taxon>
        <taxon>Pseudomonadota</taxon>
        <taxon>Alphaproteobacteria</taxon>
        <taxon>Hyphomicrobiales</taxon>
        <taxon>Rhizobiaceae</taxon>
        <taxon>Sinorhizobium/Ensifer group</taxon>
        <taxon>Sinorhizobium</taxon>
    </lineage>
</organism>